<gene>
    <name evidence="2" type="primary">ZRK7</name>
    <name evidence="4" type="ordered locus">At3g57770</name>
    <name evidence="5" type="ORF">F15B8.40</name>
</gene>
<evidence type="ECO:0000255" key="1">
    <source>
        <dbReference type="PROSITE-ProRule" id="PRU00159"/>
    </source>
</evidence>
<evidence type="ECO:0000303" key="2">
    <source>
    </source>
</evidence>
<evidence type="ECO:0000305" key="3"/>
<evidence type="ECO:0000312" key="4">
    <source>
        <dbReference type="Araport" id="AT3G57770"/>
    </source>
</evidence>
<evidence type="ECO:0000312" key="5">
    <source>
        <dbReference type="EMBL" id="CAB41178.1"/>
    </source>
</evidence>
<name>ZRK7_ARATH</name>
<keyword id="KW-0067">ATP-binding</keyword>
<keyword id="KW-0418">Kinase</keyword>
<keyword id="KW-0547">Nucleotide-binding</keyword>
<keyword id="KW-1185">Reference proteome</keyword>
<keyword id="KW-0808">Transferase</keyword>
<accession>F4J3H7</accession>
<accession>Q0WPB2</accession>
<accession>Q9SVZ1</accession>
<reference key="1">
    <citation type="journal article" date="2000" name="Nature">
        <title>Sequence and analysis of chromosome 3 of the plant Arabidopsis thaliana.</title>
        <authorList>
            <person name="Salanoubat M."/>
            <person name="Lemcke K."/>
            <person name="Rieger M."/>
            <person name="Ansorge W."/>
            <person name="Unseld M."/>
            <person name="Fartmann B."/>
            <person name="Valle G."/>
            <person name="Bloecker H."/>
            <person name="Perez-Alonso M."/>
            <person name="Obermaier B."/>
            <person name="Delseny M."/>
            <person name="Boutry M."/>
            <person name="Grivell L.A."/>
            <person name="Mache R."/>
            <person name="Puigdomenech P."/>
            <person name="De Simone V."/>
            <person name="Choisne N."/>
            <person name="Artiguenave F."/>
            <person name="Robert C."/>
            <person name="Brottier P."/>
            <person name="Wincker P."/>
            <person name="Cattolico L."/>
            <person name="Weissenbach J."/>
            <person name="Saurin W."/>
            <person name="Quetier F."/>
            <person name="Schaefer M."/>
            <person name="Mueller-Auer S."/>
            <person name="Gabel C."/>
            <person name="Fuchs M."/>
            <person name="Benes V."/>
            <person name="Wurmbach E."/>
            <person name="Drzonek H."/>
            <person name="Erfle H."/>
            <person name="Jordan N."/>
            <person name="Bangert S."/>
            <person name="Wiedelmann R."/>
            <person name="Kranz H."/>
            <person name="Voss H."/>
            <person name="Holland R."/>
            <person name="Brandt P."/>
            <person name="Nyakatura G."/>
            <person name="Vezzi A."/>
            <person name="D'Angelo M."/>
            <person name="Pallavicini A."/>
            <person name="Toppo S."/>
            <person name="Simionati B."/>
            <person name="Conrad A."/>
            <person name="Hornischer K."/>
            <person name="Kauer G."/>
            <person name="Loehnert T.-H."/>
            <person name="Nordsiek G."/>
            <person name="Reichelt J."/>
            <person name="Scharfe M."/>
            <person name="Schoen O."/>
            <person name="Bargues M."/>
            <person name="Terol J."/>
            <person name="Climent J."/>
            <person name="Navarro P."/>
            <person name="Collado C."/>
            <person name="Perez-Perez A."/>
            <person name="Ottenwaelder B."/>
            <person name="Duchemin D."/>
            <person name="Cooke R."/>
            <person name="Laudie M."/>
            <person name="Berger-Llauro C."/>
            <person name="Purnelle B."/>
            <person name="Masuy D."/>
            <person name="de Haan M."/>
            <person name="Maarse A.C."/>
            <person name="Alcaraz J.-P."/>
            <person name="Cottet A."/>
            <person name="Casacuberta E."/>
            <person name="Monfort A."/>
            <person name="Argiriou A."/>
            <person name="Flores M."/>
            <person name="Liguori R."/>
            <person name="Vitale D."/>
            <person name="Mannhaupt G."/>
            <person name="Haase D."/>
            <person name="Schoof H."/>
            <person name="Rudd S."/>
            <person name="Zaccaria P."/>
            <person name="Mewes H.-W."/>
            <person name="Mayer K.F.X."/>
            <person name="Kaul S."/>
            <person name="Town C.D."/>
            <person name="Koo H.L."/>
            <person name="Tallon L.J."/>
            <person name="Jenkins J."/>
            <person name="Rooney T."/>
            <person name="Rizzo M."/>
            <person name="Walts A."/>
            <person name="Utterback T."/>
            <person name="Fujii C.Y."/>
            <person name="Shea T.P."/>
            <person name="Creasy T.H."/>
            <person name="Haas B."/>
            <person name="Maiti R."/>
            <person name="Wu D."/>
            <person name="Peterson J."/>
            <person name="Van Aken S."/>
            <person name="Pai G."/>
            <person name="Militscher J."/>
            <person name="Sellers P."/>
            <person name="Gill J.E."/>
            <person name="Feldblyum T.V."/>
            <person name="Preuss D."/>
            <person name="Lin X."/>
            <person name="Nierman W.C."/>
            <person name="Salzberg S.L."/>
            <person name="White O."/>
            <person name="Venter J.C."/>
            <person name="Fraser C.M."/>
            <person name="Kaneko T."/>
            <person name="Nakamura Y."/>
            <person name="Sato S."/>
            <person name="Kato T."/>
            <person name="Asamizu E."/>
            <person name="Sasamoto S."/>
            <person name="Kimura T."/>
            <person name="Idesawa K."/>
            <person name="Kawashima K."/>
            <person name="Kishida Y."/>
            <person name="Kiyokawa C."/>
            <person name="Kohara M."/>
            <person name="Matsumoto M."/>
            <person name="Matsuno A."/>
            <person name="Muraki A."/>
            <person name="Nakayama S."/>
            <person name="Nakazaki N."/>
            <person name="Shinpo S."/>
            <person name="Takeuchi C."/>
            <person name="Wada T."/>
            <person name="Watanabe A."/>
            <person name="Yamada M."/>
            <person name="Yasuda M."/>
            <person name="Tabata S."/>
        </authorList>
    </citation>
    <scope>NUCLEOTIDE SEQUENCE [LARGE SCALE GENOMIC DNA]</scope>
    <source>
        <strain>cv. Columbia</strain>
    </source>
</reference>
<reference key="2">
    <citation type="journal article" date="2017" name="Plant J.">
        <title>Araport11: a complete reannotation of the Arabidopsis thaliana reference genome.</title>
        <authorList>
            <person name="Cheng C.Y."/>
            <person name="Krishnakumar V."/>
            <person name="Chan A.P."/>
            <person name="Thibaud-Nissen F."/>
            <person name="Schobel S."/>
            <person name="Town C.D."/>
        </authorList>
    </citation>
    <scope>GENOME REANNOTATION</scope>
    <source>
        <strain>cv. Columbia</strain>
    </source>
</reference>
<reference key="3">
    <citation type="submission" date="2006-07" db="EMBL/GenBank/DDBJ databases">
        <title>Large-scale analysis of RIKEN Arabidopsis full-length (RAFL) cDNAs.</title>
        <authorList>
            <person name="Totoki Y."/>
            <person name="Seki M."/>
            <person name="Ishida J."/>
            <person name="Nakajima M."/>
            <person name="Enju A."/>
            <person name="Kamiya A."/>
            <person name="Narusaka M."/>
            <person name="Shin-i T."/>
            <person name="Nakagawa M."/>
            <person name="Sakamoto N."/>
            <person name="Oishi K."/>
            <person name="Kohara Y."/>
            <person name="Kobayashi M."/>
            <person name="Toyoda A."/>
            <person name="Sakaki Y."/>
            <person name="Sakurai T."/>
            <person name="Iida K."/>
            <person name="Akiyama K."/>
            <person name="Satou M."/>
            <person name="Toyoda T."/>
            <person name="Konagaya A."/>
            <person name="Carninci P."/>
            <person name="Kawai J."/>
            <person name="Hayashizaki Y."/>
            <person name="Shinozaki K."/>
        </authorList>
    </citation>
    <scope>NUCLEOTIDE SEQUENCE [LARGE SCALE MRNA] OF 72-269</scope>
    <source>
        <strain>cv. Columbia</strain>
    </source>
</reference>
<reference key="4">
    <citation type="journal article" date="2015" name="Cell Host Microbe">
        <title>The decoy substrate of a pathogen effector and a pseudokinase specify pathogen-induced modified-self recognition and immunity in plants.</title>
        <authorList>
            <person name="Wang G."/>
            <person name="Roux B."/>
            <person name="Feng F."/>
            <person name="Guy E."/>
            <person name="Li L."/>
            <person name="Li N."/>
            <person name="Zhang X."/>
            <person name="Lautier M."/>
            <person name="Jardinaud M.-F."/>
            <person name="Chabannes M."/>
            <person name="Arlat M."/>
            <person name="Chen S."/>
            <person name="He C."/>
            <person name="Noel L.D."/>
            <person name="Zhou J.-M."/>
        </authorList>
    </citation>
    <scope>GENE FAMILY</scope>
    <scope>NOMENCLATURE</scope>
    <source>
        <strain>cv. Columbia</strain>
    </source>
</reference>
<comment type="catalytic activity">
    <reaction evidence="1">
        <text>L-seryl-[protein] + ATP = O-phospho-L-seryl-[protein] + ADP + H(+)</text>
        <dbReference type="Rhea" id="RHEA:17989"/>
        <dbReference type="Rhea" id="RHEA-COMP:9863"/>
        <dbReference type="Rhea" id="RHEA-COMP:11604"/>
        <dbReference type="ChEBI" id="CHEBI:15378"/>
        <dbReference type="ChEBI" id="CHEBI:29999"/>
        <dbReference type="ChEBI" id="CHEBI:30616"/>
        <dbReference type="ChEBI" id="CHEBI:83421"/>
        <dbReference type="ChEBI" id="CHEBI:456216"/>
        <dbReference type="EC" id="2.7.11.1"/>
    </reaction>
</comment>
<comment type="catalytic activity">
    <reaction evidence="1">
        <text>L-threonyl-[protein] + ATP = O-phospho-L-threonyl-[protein] + ADP + H(+)</text>
        <dbReference type="Rhea" id="RHEA:46608"/>
        <dbReference type="Rhea" id="RHEA-COMP:11060"/>
        <dbReference type="Rhea" id="RHEA-COMP:11605"/>
        <dbReference type="ChEBI" id="CHEBI:15378"/>
        <dbReference type="ChEBI" id="CHEBI:30013"/>
        <dbReference type="ChEBI" id="CHEBI:30616"/>
        <dbReference type="ChEBI" id="CHEBI:61977"/>
        <dbReference type="ChEBI" id="CHEBI:456216"/>
        <dbReference type="EC" id="2.7.11.1"/>
    </reaction>
</comment>
<comment type="similarity">
    <text evidence="3">Belongs to the protein kinase superfamily. Ser/Thr protein kinase family. ZRK subfamily.</text>
</comment>
<comment type="sequence caution" evidence="3">
    <conflict type="erroneous gene model prediction">
        <sequence resource="EMBL-CDS" id="CAB41178"/>
    </conflict>
</comment>
<dbReference type="EC" id="2.7.11.1" evidence="1"/>
<dbReference type="EMBL" id="AL049660">
    <property type="protein sequence ID" value="CAB41178.1"/>
    <property type="status" value="ALT_SEQ"/>
    <property type="molecule type" value="Genomic_DNA"/>
</dbReference>
<dbReference type="EMBL" id="CP002686">
    <property type="protein sequence ID" value="AEE79698.1"/>
    <property type="molecule type" value="Genomic_DNA"/>
</dbReference>
<dbReference type="EMBL" id="AK229166">
    <property type="protein sequence ID" value="BAF01037.1"/>
    <property type="molecule type" value="mRNA"/>
</dbReference>
<dbReference type="PIR" id="T06743">
    <property type="entry name" value="T06743"/>
</dbReference>
<dbReference type="RefSeq" id="NP_191336.2">
    <property type="nucleotide sequence ID" value="NM_115637.3"/>
</dbReference>
<dbReference type="SMR" id="F4J3H7"/>
<dbReference type="FunCoup" id="F4J3H7">
    <property type="interactions" value="15"/>
</dbReference>
<dbReference type="STRING" id="3702.F4J3H7"/>
<dbReference type="PaxDb" id="3702-AT3G57770.1"/>
<dbReference type="EnsemblPlants" id="AT3G57770.1">
    <property type="protein sequence ID" value="AT3G57770.1"/>
    <property type="gene ID" value="AT3G57770"/>
</dbReference>
<dbReference type="GeneID" id="824946"/>
<dbReference type="Gramene" id="AT3G57770.1">
    <property type="protein sequence ID" value="AT3G57770.1"/>
    <property type="gene ID" value="AT3G57770"/>
</dbReference>
<dbReference type="KEGG" id="ath:AT3G57770"/>
<dbReference type="Araport" id="AT3G57770"/>
<dbReference type="TAIR" id="AT3G57770">
    <property type="gene designation" value="ZRK7"/>
</dbReference>
<dbReference type="eggNOG" id="KOG1187">
    <property type="taxonomic scope" value="Eukaryota"/>
</dbReference>
<dbReference type="HOGENOM" id="CLU_1035640_0_0_1"/>
<dbReference type="InParanoid" id="F4J3H7"/>
<dbReference type="OMA" id="EPHYMEN"/>
<dbReference type="PRO" id="PR:F4J3H7"/>
<dbReference type="Proteomes" id="UP000006548">
    <property type="component" value="Chromosome 3"/>
</dbReference>
<dbReference type="ExpressionAtlas" id="F4J3H7">
    <property type="expression patterns" value="baseline and differential"/>
</dbReference>
<dbReference type="GO" id="GO:0005524">
    <property type="term" value="F:ATP binding"/>
    <property type="evidence" value="ECO:0007669"/>
    <property type="project" value="UniProtKB-KW"/>
</dbReference>
<dbReference type="GO" id="GO:0106310">
    <property type="term" value="F:protein serine kinase activity"/>
    <property type="evidence" value="ECO:0007669"/>
    <property type="project" value="RHEA"/>
</dbReference>
<dbReference type="GO" id="GO:0004674">
    <property type="term" value="F:protein serine/threonine kinase activity"/>
    <property type="evidence" value="ECO:0007669"/>
    <property type="project" value="UniProtKB-EC"/>
</dbReference>
<dbReference type="GO" id="GO:0004713">
    <property type="term" value="F:protein tyrosine kinase activity"/>
    <property type="evidence" value="ECO:0007669"/>
    <property type="project" value="InterPro"/>
</dbReference>
<dbReference type="GO" id="GO:0007166">
    <property type="term" value="P:cell surface receptor signaling pathway"/>
    <property type="evidence" value="ECO:0007669"/>
    <property type="project" value="InterPro"/>
</dbReference>
<dbReference type="FunFam" id="3.30.200.20:FF:000515">
    <property type="entry name" value="Inactive serine/threonine-protein kinase"/>
    <property type="match status" value="1"/>
</dbReference>
<dbReference type="Gene3D" id="3.30.200.20">
    <property type="entry name" value="Phosphorylase Kinase, domain 1"/>
    <property type="match status" value="1"/>
</dbReference>
<dbReference type="Gene3D" id="1.10.510.10">
    <property type="entry name" value="Transferase(Phosphotransferase) domain 1"/>
    <property type="match status" value="1"/>
</dbReference>
<dbReference type="InterPro" id="IPR011009">
    <property type="entry name" value="Kinase-like_dom_sf"/>
</dbReference>
<dbReference type="InterPro" id="IPR000719">
    <property type="entry name" value="Prot_kinase_dom"/>
</dbReference>
<dbReference type="InterPro" id="IPR001245">
    <property type="entry name" value="Ser-Thr/Tyr_kinase_cat_dom"/>
</dbReference>
<dbReference type="InterPro" id="IPR008271">
    <property type="entry name" value="Ser/Thr_kinase_AS"/>
</dbReference>
<dbReference type="InterPro" id="IPR020635">
    <property type="entry name" value="Tyr_kinase_cat_dom"/>
</dbReference>
<dbReference type="InterPro" id="IPR045274">
    <property type="entry name" value="WAK-like"/>
</dbReference>
<dbReference type="PANTHER" id="PTHR27005:SF369">
    <property type="entry name" value="PROTEIN KINASE SUPERFAMILY PROTEIN-RELATED"/>
    <property type="match status" value="1"/>
</dbReference>
<dbReference type="PANTHER" id="PTHR27005">
    <property type="entry name" value="WALL-ASSOCIATED RECEPTOR KINASE-LIKE 21"/>
    <property type="match status" value="1"/>
</dbReference>
<dbReference type="Pfam" id="PF07714">
    <property type="entry name" value="PK_Tyr_Ser-Thr"/>
    <property type="match status" value="1"/>
</dbReference>
<dbReference type="SMART" id="SM00219">
    <property type="entry name" value="TyrKc"/>
    <property type="match status" value="1"/>
</dbReference>
<dbReference type="SUPFAM" id="SSF56112">
    <property type="entry name" value="Protein kinase-like (PK-like)"/>
    <property type="match status" value="1"/>
</dbReference>
<dbReference type="PROSITE" id="PS50011">
    <property type="entry name" value="PROTEIN_KINASE_DOM"/>
    <property type="match status" value="1"/>
</dbReference>
<dbReference type="PROSITE" id="PS00108">
    <property type="entry name" value="PROTEIN_KINASE_ST"/>
    <property type="match status" value="1"/>
</dbReference>
<sequence>MAHISDIKLIRTDTTLDLSQKAEKGMIWTMGGASYLYYNAYDHGSLTCRCGTLLIASSGGKYNPIRTFSSHQILEATNNFDWSYAIGVDRFVWYKGTIENRAVLIKYYKGEPFNFDPDNFYRDIAVSSMMSSHKNVLKLLGCCLEFPRPVLVCEYPEKGALAYIGGAGEVIKPLAWSVRLKIAKEIADAVTYLHTEFPRTIIHRDLKLTNIFLDENWTAKLSSFSLSIPIPEGELGVEDIVCGTQGFGEPHYMENMDSIKNRLMVTVIT</sequence>
<protein>
    <recommendedName>
        <fullName evidence="2">Serine/threonine-protein kinase ZRK7</fullName>
        <ecNumber evidence="1">2.7.11.1</ecNumber>
    </recommendedName>
</protein>
<feature type="chain" id="PRO_0000449494" description="Serine/threonine-protein kinase ZRK7">
    <location>
        <begin position="1"/>
        <end position="269"/>
    </location>
</feature>
<feature type="domain" description="Protein kinase" evidence="1">
    <location>
        <begin position="80"/>
        <end position="269"/>
    </location>
</feature>
<feature type="active site" description="Proton acceptor" evidence="1">
    <location>
        <position position="205"/>
    </location>
</feature>
<feature type="binding site" evidence="1">
    <location>
        <begin position="86"/>
        <end position="94"/>
    </location>
    <ligand>
        <name>ATP</name>
        <dbReference type="ChEBI" id="CHEBI:30616"/>
    </ligand>
</feature>
<feature type="binding site" evidence="1">
    <location>
        <position position="106"/>
    </location>
    <ligand>
        <name>ATP</name>
        <dbReference type="ChEBI" id="CHEBI:30616"/>
    </ligand>
</feature>
<proteinExistence type="evidence at transcript level"/>
<organism>
    <name type="scientific">Arabidopsis thaliana</name>
    <name type="common">Mouse-ear cress</name>
    <dbReference type="NCBI Taxonomy" id="3702"/>
    <lineage>
        <taxon>Eukaryota</taxon>
        <taxon>Viridiplantae</taxon>
        <taxon>Streptophyta</taxon>
        <taxon>Embryophyta</taxon>
        <taxon>Tracheophyta</taxon>
        <taxon>Spermatophyta</taxon>
        <taxon>Magnoliopsida</taxon>
        <taxon>eudicotyledons</taxon>
        <taxon>Gunneridae</taxon>
        <taxon>Pentapetalae</taxon>
        <taxon>rosids</taxon>
        <taxon>malvids</taxon>
        <taxon>Brassicales</taxon>
        <taxon>Brassicaceae</taxon>
        <taxon>Camelineae</taxon>
        <taxon>Arabidopsis</taxon>
    </lineage>
</organism>